<reference key="1">
    <citation type="journal article" date="2006" name="Proc. Natl. Acad. Sci. U.S.A.">
        <title>Molecular genetic anatomy of inter- and intraserotype variation in the human bacterial pathogen group A Streptococcus.</title>
        <authorList>
            <person name="Beres S.B."/>
            <person name="Richter E.W."/>
            <person name="Nagiec M.J."/>
            <person name="Sumby P."/>
            <person name="Porcella S.F."/>
            <person name="DeLeo F.R."/>
            <person name="Musser J.M."/>
        </authorList>
    </citation>
    <scope>NUCLEOTIDE SEQUENCE [LARGE SCALE GENOMIC DNA]</scope>
    <source>
        <strain>MGAS10270</strain>
    </source>
</reference>
<proteinExistence type="inferred from homology"/>
<keyword id="KW-0963">Cytoplasm</keyword>
<keyword id="KW-0274">FAD</keyword>
<keyword id="KW-0285">Flavoprotein</keyword>
<keyword id="KW-0489">Methyltransferase</keyword>
<keyword id="KW-0520">NAD</keyword>
<keyword id="KW-0521">NADP</keyword>
<keyword id="KW-0808">Transferase</keyword>
<keyword id="KW-0819">tRNA processing</keyword>
<protein>
    <recommendedName>
        <fullName evidence="1">Methylenetetrahydrofolate--tRNA-(uracil-5-)-methyltransferase TrmFO</fullName>
        <ecNumber evidence="1">2.1.1.74</ecNumber>
    </recommendedName>
    <alternativeName>
        <fullName evidence="1">Folate-dependent tRNA (uracil-5-)-methyltransferase</fullName>
    </alternativeName>
    <alternativeName>
        <fullName evidence="1">Folate-dependent tRNA(M-5-U54)-methyltransferase</fullName>
    </alternativeName>
</protein>
<dbReference type="EC" id="2.1.1.74" evidence="1"/>
<dbReference type="EMBL" id="CP000260">
    <property type="protein sequence ID" value="ABF34072.1"/>
    <property type="status" value="ALT_INIT"/>
    <property type="molecule type" value="Genomic_DNA"/>
</dbReference>
<dbReference type="SMR" id="Q1JGS2"/>
<dbReference type="KEGG" id="sph:MGAS10270_Spy1007"/>
<dbReference type="HOGENOM" id="CLU_033057_1_0_9"/>
<dbReference type="Proteomes" id="UP000002436">
    <property type="component" value="Chromosome"/>
</dbReference>
<dbReference type="GO" id="GO:0005829">
    <property type="term" value="C:cytosol"/>
    <property type="evidence" value="ECO:0007669"/>
    <property type="project" value="TreeGrafter"/>
</dbReference>
<dbReference type="GO" id="GO:0050660">
    <property type="term" value="F:flavin adenine dinucleotide binding"/>
    <property type="evidence" value="ECO:0007669"/>
    <property type="project" value="UniProtKB-UniRule"/>
</dbReference>
<dbReference type="GO" id="GO:0047151">
    <property type="term" value="F:tRNA (uracil(54)-C5)-methyltransferase activity, 5,10-methylenetetrahydrofolate-dependent"/>
    <property type="evidence" value="ECO:0007669"/>
    <property type="project" value="UniProtKB-UniRule"/>
</dbReference>
<dbReference type="GO" id="GO:0030488">
    <property type="term" value="P:tRNA methylation"/>
    <property type="evidence" value="ECO:0007669"/>
    <property type="project" value="TreeGrafter"/>
</dbReference>
<dbReference type="GO" id="GO:0002098">
    <property type="term" value="P:tRNA wobble uridine modification"/>
    <property type="evidence" value="ECO:0007669"/>
    <property type="project" value="TreeGrafter"/>
</dbReference>
<dbReference type="FunFam" id="3.50.50.60:FF:000035">
    <property type="entry name" value="Methylenetetrahydrofolate--tRNA-(uracil-5-)-methyltransferase TrmFO"/>
    <property type="match status" value="1"/>
</dbReference>
<dbReference type="FunFam" id="3.50.50.60:FF:000040">
    <property type="entry name" value="Methylenetetrahydrofolate--tRNA-(uracil-5-)-methyltransferase TrmFO"/>
    <property type="match status" value="1"/>
</dbReference>
<dbReference type="Gene3D" id="3.50.50.60">
    <property type="entry name" value="FAD/NAD(P)-binding domain"/>
    <property type="match status" value="2"/>
</dbReference>
<dbReference type="HAMAP" id="MF_01037">
    <property type="entry name" value="TrmFO"/>
    <property type="match status" value="1"/>
</dbReference>
<dbReference type="InterPro" id="IPR036188">
    <property type="entry name" value="FAD/NAD-bd_sf"/>
</dbReference>
<dbReference type="InterPro" id="IPR002218">
    <property type="entry name" value="MnmG-rel"/>
</dbReference>
<dbReference type="InterPro" id="IPR020595">
    <property type="entry name" value="MnmG-rel_CS"/>
</dbReference>
<dbReference type="InterPro" id="IPR040131">
    <property type="entry name" value="MnmG_N"/>
</dbReference>
<dbReference type="InterPro" id="IPR004417">
    <property type="entry name" value="TrmFO"/>
</dbReference>
<dbReference type="NCBIfam" id="TIGR00137">
    <property type="entry name" value="gid_trmFO"/>
    <property type="match status" value="1"/>
</dbReference>
<dbReference type="NCBIfam" id="NF003739">
    <property type="entry name" value="PRK05335.1"/>
    <property type="match status" value="1"/>
</dbReference>
<dbReference type="PANTHER" id="PTHR11806">
    <property type="entry name" value="GLUCOSE INHIBITED DIVISION PROTEIN A"/>
    <property type="match status" value="1"/>
</dbReference>
<dbReference type="PANTHER" id="PTHR11806:SF2">
    <property type="entry name" value="METHYLENETETRAHYDROFOLATE--TRNA-(URACIL-5-)-METHYLTRANSFERASE TRMFO"/>
    <property type="match status" value="1"/>
</dbReference>
<dbReference type="Pfam" id="PF01134">
    <property type="entry name" value="GIDA"/>
    <property type="match status" value="1"/>
</dbReference>
<dbReference type="SUPFAM" id="SSF51905">
    <property type="entry name" value="FAD/NAD(P)-binding domain"/>
    <property type="match status" value="1"/>
</dbReference>
<dbReference type="PROSITE" id="PS01281">
    <property type="entry name" value="GIDA_2"/>
    <property type="match status" value="1"/>
</dbReference>
<name>TRMFO_STRPD</name>
<feature type="chain" id="PRO_0000346401" description="Methylenetetrahydrofolate--tRNA-(uracil-5-)-methyltransferase TrmFO">
    <location>
        <begin position="1"/>
        <end position="448"/>
    </location>
</feature>
<feature type="binding site" evidence="1">
    <location>
        <begin position="13"/>
        <end position="18"/>
    </location>
    <ligand>
        <name>FAD</name>
        <dbReference type="ChEBI" id="CHEBI:57692"/>
    </ligand>
</feature>
<sequence>MSQSTATYINVIGAGLAGSEAAYQIAKRGIPVKLYEMRGVKATPQHKTTNFAELVCSNSFRGDSLTNAVGLLKEEMRRLDSIIMRNGEANRVPAGGAMAVDREGYAESVTAELENHPLIEVIRDEITEIPDDAITVIATGPLTSDALAEKIHALNGGDGFYFYDAAAPIIDKSTIDMSKVYLKSRYDKGEAAYLNCPMTKEEFMAFHEALTTAEEAPLNSFEKEKYFEGCMPIEVMAKRGIKTMLYGPMKPVGLEYPDDYTGPRDGEFKTPYAVVQLRQDNTAGSLYNIVGFQTHLKWGEQKRVFQMIPGLENAEFVRYGVMHRNSYMDSPNLLTETFQSRRNPNLFFAGQMTGVEGYVESAASGLVAGINAARLFKREEALIFPQTTAIGSLPHYVTHADSKHFQPMNVNFGIIKELEGLRIRDKKERYEAIASRALADLDTCLASL</sequence>
<accession>Q1JGS2</accession>
<comment type="function">
    <text evidence="1">Catalyzes the folate-dependent formation of 5-methyl-uridine at position 54 (M-5-U54) in all tRNAs.</text>
</comment>
<comment type="catalytic activity">
    <reaction evidence="1">
        <text>uridine(54) in tRNA + (6R)-5,10-methylene-5,6,7,8-tetrahydrofolate + NADH + H(+) = 5-methyluridine(54) in tRNA + (6S)-5,6,7,8-tetrahydrofolate + NAD(+)</text>
        <dbReference type="Rhea" id="RHEA:16873"/>
        <dbReference type="Rhea" id="RHEA-COMP:10167"/>
        <dbReference type="Rhea" id="RHEA-COMP:10193"/>
        <dbReference type="ChEBI" id="CHEBI:15378"/>
        <dbReference type="ChEBI" id="CHEBI:15636"/>
        <dbReference type="ChEBI" id="CHEBI:57453"/>
        <dbReference type="ChEBI" id="CHEBI:57540"/>
        <dbReference type="ChEBI" id="CHEBI:57945"/>
        <dbReference type="ChEBI" id="CHEBI:65315"/>
        <dbReference type="ChEBI" id="CHEBI:74447"/>
        <dbReference type="EC" id="2.1.1.74"/>
    </reaction>
</comment>
<comment type="catalytic activity">
    <reaction evidence="1">
        <text>uridine(54) in tRNA + (6R)-5,10-methylene-5,6,7,8-tetrahydrofolate + NADPH + H(+) = 5-methyluridine(54) in tRNA + (6S)-5,6,7,8-tetrahydrofolate + NADP(+)</text>
        <dbReference type="Rhea" id="RHEA:62372"/>
        <dbReference type="Rhea" id="RHEA-COMP:10167"/>
        <dbReference type="Rhea" id="RHEA-COMP:10193"/>
        <dbReference type="ChEBI" id="CHEBI:15378"/>
        <dbReference type="ChEBI" id="CHEBI:15636"/>
        <dbReference type="ChEBI" id="CHEBI:57453"/>
        <dbReference type="ChEBI" id="CHEBI:57783"/>
        <dbReference type="ChEBI" id="CHEBI:58349"/>
        <dbReference type="ChEBI" id="CHEBI:65315"/>
        <dbReference type="ChEBI" id="CHEBI:74447"/>
        <dbReference type="EC" id="2.1.1.74"/>
    </reaction>
</comment>
<comment type="cofactor">
    <cofactor evidence="1">
        <name>FAD</name>
        <dbReference type="ChEBI" id="CHEBI:57692"/>
    </cofactor>
</comment>
<comment type="subcellular location">
    <subcellularLocation>
        <location evidence="1">Cytoplasm</location>
    </subcellularLocation>
</comment>
<comment type="similarity">
    <text evidence="1">Belongs to the MnmG family. TrmFO subfamily.</text>
</comment>
<comment type="sequence caution" evidence="2">
    <conflict type="erroneous initiation">
        <sequence resource="EMBL-CDS" id="ABF34072"/>
    </conflict>
</comment>
<evidence type="ECO:0000255" key="1">
    <source>
        <dbReference type="HAMAP-Rule" id="MF_01037"/>
    </source>
</evidence>
<evidence type="ECO:0000305" key="2"/>
<organism>
    <name type="scientific">Streptococcus pyogenes serotype M2 (strain MGAS10270)</name>
    <dbReference type="NCBI Taxonomy" id="370552"/>
    <lineage>
        <taxon>Bacteria</taxon>
        <taxon>Bacillati</taxon>
        <taxon>Bacillota</taxon>
        <taxon>Bacilli</taxon>
        <taxon>Lactobacillales</taxon>
        <taxon>Streptococcaceae</taxon>
        <taxon>Streptococcus</taxon>
    </lineage>
</organism>
<gene>
    <name evidence="1" type="primary">trmFO</name>
    <name type="ordered locus">MGAS10270_Spy1007</name>
</gene>